<reference key="1">
    <citation type="submission" date="2006-12" db="EMBL/GenBank/DDBJ databases">
        <title>Complete sequence of Chlorobium phaeobacteroides DSM 266.</title>
        <authorList>
            <consortium name="US DOE Joint Genome Institute"/>
            <person name="Copeland A."/>
            <person name="Lucas S."/>
            <person name="Lapidus A."/>
            <person name="Barry K."/>
            <person name="Detter J.C."/>
            <person name="Glavina del Rio T."/>
            <person name="Hammon N."/>
            <person name="Israni S."/>
            <person name="Pitluck S."/>
            <person name="Goltsman E."/>
            <person name="Schmutz J."/>
            <person name="Larimer F."/>
            <person name="Land M."/>
            <person name="Hauser L."/>
            <person name="Mikhailova N."/>
            <person name="Li T."/>
            <person name="Overmann J."/>
            <person name="Bryant D.A."/>
            <person name="Richardson P."/>
        </authorList>
    </citation>
    <scope>NUCLEOTIDE SEQUENCE [LARGE SCALE GENOMIC DNA]</scope>
    <source>
        <strain>DSM 266 / SMG 266 / 2430</strain>
    </source>
</reference>
<name>TRPA_CHLPD</name>
<accession>A1BHS2</accession>
<gene>
    <name evidence="1" type="primary">trpA</name>
    <name type="ordered locus">Cpha266_1933</name>
</gene>
<comment type="function">
    <text evidence="1">The alpha subunit is responsible for the aldol cleavage of indoleglycerol phosphate to indole and glyceraldehyde 3-phosphate.</text>
</comment>
<comment type="catalytic activity">
    <reaction evidence="1">
        <text>(1S,2R)-1-C-(indol-3-yl)glycerol 3-phosphate + L-serine = D-glyceraldehyde 3-phosphate + L-tryptophan + H2O</text>
        <dbReference type="Rhea" id="RHEA:10532"/>
        <dbReference type="ChEBI" id="CHEBI:15377"/>
        <dbReference type="ChEBI" id="CHEBI:33384"/>
        <dbReference type="ChEBI" id="CHEBI:57912"/>
        <dbReference type="ChEBI" id="CHEBI:58866"/>
        <dbReference type="ChEBI" id="CHEBI:59776"/>
        <dbReference type="EC" id="4.2.1.20"/>
    </reaction>
</comment>
<comment type="pathway">
    <text evidence="1">Amino-acid biosynthesis; L-tryptophan biosynthesis; L-tryptophan from chorismate: step 5/5.</text>
</comment>
<comment type="subunit">
    <text evidence="1">Tetramer of two alpha and two beta chains.</text>
</comment>
<comment type="similarity">
    <text evidence="1">Belongs to the TrpA family.</text>
</comment>
<proteinExistence type="inferred from homology"/>
<feature type="chain" id="PRO_1000018188" description="Tryptophan synthase alpha chain">
    <location>
        <begin position="1"/>
        <end position="267"/>
    </location>
</feature>
<feature type="active site" description="Proton acceptor" evidence="1">
    <location>
        <position position="47"/>
    </location>
</feature>
<feature type="active site" description="Proton acceptor" evidence="1">
    <location>
        <position position="58"/>
    </location>
</feature>
<dbReference type="EC" id="4.2.1.20" evidence="1"/>
<dbReference type="EMBL" id="CP000492">
    <property type="protein sequence ID" value="ABL65949.1"/>
    <property type="molecule type" value="Genomic_DNA"/>
</dbReference>
<dbReference type="RefSeq" id="WP_011745755.1">
    <property type="nucleotide sequence ID" value="NC_008639.1"/>
</dbReference>
<dbReference type="SMR" id="A1BHS2"/>
<dbReference type="STRING" id="290317.Cpha266_1933"/>
<dbReference type="KEGG" id="cph:Cpha266_1933"/>
<dbReference type="eggNOG" id="COG0159">
    <property type="taxonomic scope" value="Bacteria"/>
</dbReference>
<dbReference type="HOGENOM" id="CLU_016734_0_0_10"/>
<dbReference type="OrthoDB" id="9804578at2"/>
<dbReference type="UniPathway" id="UPA00035">
    <property type="reaction ID" value="UER00044"/>
</dbReference>
<dbReference type="Proteomes" id="UP000008701">
    <property type="component" value="Chromosome"/>
</dbReference>
<dbReference type="GO" id="GO:0005829">
    <property type="term" value="C:cytosol"/>
    <property type="evidence" value="ECO:0007669"/>
    <property type="project" value="TreeGrafter"/>
</dbReference>
<dbReference type="GO" id="GO:0004834">
    <property type="term" value="F:tryptophan synthase activity"/>
    <property type="evidence" value="ECO:0007669"/>
    <property type="project" value="UniProtKB-UniRule"/>
</dbReference>
<dbReference type="CDD" id="cd04724">
    <property type="entry name" value="Tryptophan_synthase_alpha"/>
    <property type="match status" value="1"/>
</dbReference>
<dbReference type="Gene3D" id="3.20.20.70">
    <property type="entry name" value="Aldolase class I"/>
    <property type="match status" value="1"/>
</dbReference>
<dbReference type="HAMAP" id="MF_00131">
    <property type="entry name" value="Trp_synth_alpha"/>
    <property type="match status" value="1"/>
</dbReference>
<dbReference type="InterPro" id="IPR013785">
    <property type="entry name" value="Aldolase_TIM"/>
</dbReference>
<dbReference type="InterPro" id="IPR011060">
    <property type="entry name" value="RibuloseP-bd_barrel"/>
</dbReference>
<dbReference type="InterPro" id="IPR018204">
    <property type="entry name" value="Trp_synthase_alpha_AS"/>
</dbReference>
<dbReference type="InterPro" id="IPR002028">
    <property type="entry name" value="Trp_synthase_suA"/>
</dbReference>
<dbReference type="NCBIfam" id="TIGR00262">
    <property type="entry name" value="trpA"/>
    <property type="match status" value="1"/>
</dbReference>
<dbReference type="PANTHER" id="PTHR43406:SF1">
    <property type="entry name" value="TRYPTOPHAN SYNTHASE ALPHA CHAIN, CHLOROPLASTIC"/>
    <property type="match status" value="1"/>
</dbReference>
<dbReference type="PANTHER" id="PTHR43406">
    <property type="entry name" value="TRYPTOPHAN SYNTHASE, ALPHA CHAIN"/>
    <property type="match status" value="1"/>
</dbReference>
<dbReference type="Pfam" id="PF00290">
    <property type="entry name" value="Trp_syntA"/>
    <property type="match status" value="1"/>
</dbReference>
<dbReference type="SUPFAM" id="SSF51366">
    <property type="entry name" value="Ribulose-phoshate binding barrel"/>
    <property type="match status" value="1"/>
</dbReference>
<dbReference type="PROSITE" id="PS00167">
    <property type="entry name" value="TRP_SYNTHASE_ALPHA"/>
    <property type="match status" value="1"/>
</dbReference>
<sequence length="267" mass="28893">MPENRIARLLKKNKKLLIAYYMPEFPVPGATLPVLEALQKNGADLIELGIAYSDPIGDGPVIQDAAHTAIRNGMSVKKLLDLVRQARKGEGCRKITAPILLMGYCNPLIAYGGDCFLQDAASAGVDGLLLPDLPPEEADDFLERAKGFGLTVVFLVSPVTPPERIEYIDSLSTDFSYCLAVNATTGTAKLSDAGSEAAIDEYLRRVRRHTRKKFVVGFGIKDKARVGHMWELADGAVVGTALLQHIAGAGTPEETARLAGEFWQTLQ</sequence>
<protein>
    <recommendedName>
        <fullName evidence="1">Tryptophan synthase alpha chain</fullName>
        <ecNumber evidence="1">4.2.1.20</ecNumber>
    </recommendedName>
</protein>
<organism>
    <name type="scientific">Chlorobium phaeobacteroides (strain DSM 266 / SMG 266 / 2430)</name>
    <dbReference type="NCBI Taxonomy" id="290317"/>
    <lineage>
        <taxon>Bacteria</taxon>
        <taxon>Pseudomonadati</taxon>
        <taxon>Chlorobiota</taxon>
        <taxon>Chlorobiia</taxon>
        <taxon>Chlorobiales</taxon>
        <taxon>Chlorobiaceae</taxon>
        <taxon>Chlorobium/Pelodictyon group</taxon>
        <taxon>Chlorobium</taxon>
    </lineage>
</organism>
<keyword id="KW-0028">Amino-acid biosynthesis</keyword>
<keyword id="KW-0057">Aromatic amino acid biosynthesis</keyword>
<keyword id="KW-0456">Lyase</keyword>
<keyword id="KW-1185">Reference proteome</keyword>
<keyword id="KW-0822">Tryptophan biosynthesis</keyword>
<evidence type="ECO:0000255" key="1">
    <source>
        <dbReference type="HAMAP-Rule" id="MF_00131"/>
    </source>
</evidence>